<sequence length="482" mass="54989">MKFIIKLFPEITIKSQSVRLRFIKILTGNIRNVLKHYDETLAVVRHWDNIEVRAKDENQRLTIRDALTRIPGIHHILEVEDVPFTDMHDIFEKALVQYRDQLEGKTFCVRVKRRGKHDFSSIDVERYVGGGLNQHIESARVKLTNPDVTVHLEVEDDRLLLIKGRYEGIGGFPIGTQEDVLSLISGGFDSGVSSYMLMRRGCRVHYCFFNLGGAAHEIGVRQVAHYLWNRFGSSHRVRFVAINFEPVVGEILEKIDDGQMGVILKRMMVRAASKVAERYGVQALVTGEALGQVSSQTLTNLRLIDNVSDTLILRPLISYDKEHIINLARQIGTEDFARTMPEYCGVISKSPTVKAVKSKIEAEEEKFDFSILDKVVEEANNVDIREIAQQTEQEVVEVETVNGFGPNDVILDIRSVDEQEDKPLKVEGIDVVSLPFYKLSTKFGDLDQNKTWLLWCERGVMSRLQALYLREQGFNNVKVYRP</sequence>
<gene>
    <name evidence="1" type="primary">thiI</name>
    <name type="ordered locus">SF0360</name>
    <name type="ordered locus">S0368</name>
</gene>
<proteinExistence type="inferred from homology"/>
<accession>Q83SG1</accession>
<accession>Q7UDJ6</accession>
<organism>
    <name type="scientific">Shigella flexneri</name>
    <dbReference type="NCBI Taxonomy" id="623"/>
    <lineage>
        <taxon>Bacteria</taxon>
        <taxon>Pseudomonadati</taxon>
        <taxon>Pseudomonadota</taxon>
        <taxon>Gammaproteobacteria</taxon>
        <taxon>Enterobacterales</taxon>
        <taxon>Enterobacteriaceae</taxon>
        <taxon>Shigella</taxon>
    </lineage>
</organism>
<comment type="function">
    <text evidence="1">Catalyzes the ATP-dependent transfer of a sulfur to tRNA to produce 4-thiouridine in position 8 of tRNAs, which functions as a near-UV photosensor. Also catalyzes the transfer of sulfur to the sulfur carrier protein ThiS, forming ThiS-thiocarboxylate. This is a step in the synthesis of thiazole, in the thiamine biosynthesis pathway. The sulfur is donated as persulfide by IscS.</text>
</comment>
<comment type="catalytic activity">
    <reaction evidence="1">
        <text>[ThiI sulfur-carrier protein]-S-sulfanyl-L-cysteine + a uridine in tRNA + 2 reduced [2Fe-2S]-[ferredoxin] + ATP + H(+) = [ThiI sulfur-carrier protein]-L-cysteine + a 4-thiouridine in tRNA + 2 oxidized [2Fe-2S]-[ferredoxin] + AMP + diphosphate</text>
        <dbReference type="Rhea" id="RHEA:24176"/>
        <dbReference type="Rhea" id="RHEA-COMP:10000"/>
        <dbReference type="Rhea" id="RHEA-COMP:10001"/>
        <dbReference type="Rhea" id="RHEA-COMP:13337"/>
        <dbReference type="Rhea" id="RHEA-COMP:13338"/>
        <dbReference type="Rhea" id="RHEA-COMP:13339"/>
        <dbReference type="Rhea" id="RHEA-COMP:13340"/>
        <dbReference type="ChEBI" id="CHEBI:15378"/>
        <dbReference type="ChEBI" id="CHEBI:29950"/>
        <dbReference type="ChEBI" id="CHEBI:30616"/>
        <dbReference type="ChEBI" id="CHEBI:33019"/>
        <dbReference type="ChEBI" id="CHEBI:33737"/>
        <dbReference type="ChEBI" id="CHEBI:33738"/>
        <dbReference type="ChEBI" id="CHEBI:61963"/>
        <dbReference type="ChEBI" id="CHEBI:65315"/>
        <dbReference type="ChEBI" id="CHEBI:136798"/>
        <dbReference type="ChEBI" id="CHEBI:456215"/>
        <dbReference type="EC" id="2.8.1.4"/>
    </reaction>
</comment>
<comment type="catalytic activity">
    <reaction evidence="1">
        <text>[ThiS sulfur-carrier protein]-C-terminal Gly-Gly-AMP + S-sulfanyl-L-cysteinyl-[cysteine desulfurase] + AH2 = [ThiS sulfur-carrier protein]-C-terminal-Gly-aminoethanethioate + L-cysteinyl-[cysteine desulfurase] + A + AMP + 2 H(+)</text>
        <dbReference type="Rhea" id="RHEA:43340"/>
        <dbReference type="Rhea" id="RHEA-COMP:12157"/>
        <dbReference type="Rhea" id="RHEA-COMP:12158"/>
        <dbReference type="Rhea" id="RHEA-COMP:12910"/>
        <dbReference type="Rhea" id="RHEA-COMP:19908"/>
        <dbReference type="ChEBI" id="CHEBI:13193"/>
        <dbReference type="ChEBI" id="CHEBI:15378"/>
        <dbReference type="ChEBI" id="CHEBI:17499"/>
        <dbReference type="ChEBI" id="CHEBI:29950"/>
        <dbReference type="ChEBI" id="CHEBI:61963"/>
        <dbReference type="ChEBI" id="CHEBI:90618"/>
        <dbReference type="ChEBI" id="CHEBI:232372"/>
        <dbReference type="ChEBI" id="CHEBI:456215"/>
    </reaction>
</comment>
<comment type="pathway">
    <text evidence="1">Cofactor biosynthesis; thiamine diphosphate biosynthesis.</text>
</comment>
<comment type="subcellular location">
    <subcellularLocation>
        <location evidence="1">Cytoplasm</location>
    </subcellularLocation>
</comment>
<comment type="similarity">
    <text evidence="1">Belongs to the ThiI family.</text>
</comment>
<comment type="sequence caution" evidence="2">
    <conflict type="frameshift">
        <sequence resource="EMBL-CDS" id="AAN42018"/>
    </conflict>
</comment>
<keyword id="KW-0067">ATP-binding</keyword>
<keyword id="KW-0963">Cytoplasm</keyword>
<keyword id="KW-1015">Disulfide bond</keyword>
<keyword id="KW-0547">Nucleotide-binding</keyword>
<keyword id="KW-0676">Redox-active center</keyword>
<keyword id="KW-1185">Reference proteome</keyword>
<keyword id="KW-0694">RNA-binding</keyword>
<keyword id="KW-0784">Thiamine biosynthesis</keyword>
<keyword id="KW-0808">Transferase</keyword>
<keyword id="KW-0820">tRNA-binding</keyword>
<feature type="chain" id="PRO_0000154862" description="tRNA sulfurtransferase">
    <location>
        <begin position="1"/>
        <end position="482"/>
    </location>
</feature>
<feature type="domain" description="THUMP" evidence="1">
    <location>
        <begin position="61"/>
        <end position="165"/>
    </location>
</feature>
<feature type="domain" description="Rhodanese" evidence="1">
    <location>
        <begin position="404"/>
        <end position="482"/>
    </location>
</feature>
<feature type="active site" description="Cysteine persulfide intermediate" evidence="1">
    <location>
        <position position="456"/>
    </location>
</feature>
<feature type="binding site" evidence="1">
    <location>
        <begin position="183"/>
        <end position="184"/>
    </location>
    <ligand>
        <name>ATP</name>
        <dbReference type="ChEBI" id="CHEBI:30616"/>
    </ligand>
</feature>
<feature type="binding site" evidence="1">
    <location>
        <position position="265"/>
    </location>
    <ligand>
        <name>ATP</name>
        <dbReference type="ChEBI" id="CHEBI:30616"/>
    </ligand>
</feature>
<feature type="binding site" evidence="1">
    <location>
        <position position="287"/>
    </location>
    <ligand>
        <name>ATP</name>
        <dbReference type="ChEBI" id="CHEBI:30616"/>
    </ligand>
</feature>
<feature type="binding site" evidence="1">
    <location>
        <position position="296"/>
    </location>
    <ligand>
        <name>ATP</name>
        <dbReference type="ChEBI" id="CHEBI:30616"/>
    </ligand>
</feature>
<feature type="disulfide bond" description="Redox-active" evidence="1">
    <location>
        <begin position="344"/>
        <end position="456"/>
    </location>
</feature>
<dbReference type="EC" id="2.8.1.4" evidence="1"/>
<dbReference type="EMBL" id="AE005674">
    <property type="protein sequence ID" value="AAN42018.1"/>
    <property type="status" value="ALT_FRAME"/>
    <property type="molecule type" value="Genomic_DNA"/>
</dbReference>
<dbReference type="EMBL" id="AE014073">
    <property type="protein sequence ID" value="AAP15894.1"/>
    <property type="molecule type" value="Genomic_DNA"/>
</dbReference>
<dbReference type="RefSeq" id="WP_000668704.1">
    <property type="nucleotide sequence ID" value="NZ_WPGW01000023.1"/>
</dbReference>
<dbReference type="SMR" id="Q83SG1"/>
<dbReference type="STRING" id="198214.SF0360"/>
<dbReference type="PaxDb" id="198214-SF0360"/>
<dbReference type="GeneID" id="75170441"/>
<dbReference type="KEGG" id="sfx:S0368"/>
<dbReference type="PATRIC" id="fig|623.156.peg.3510"/>
<dbReference type="HOGENOM" id="CLU_037952_4_1_6"/>
<dbReference type="UniPathway" id="UPA00060"/>
<dbReference type="Proteomes" id="UP000001006">
    <property type="component" value="Chromosome"/>
</dbReference>
<dbReference type="Proteomes" id="UP000002673">
    <property type="component" value="Chromosome"/>
</dbReference>
<dbReference type="GO" id="GO:0005829">
    <property type="term" value="C:cytosol"/>
    <property type="evidence" value="ECO:0007669"/>
    <property type="project" value="TreeGrafter"/>
</dbReference>
<dbReference type="GO" id="GO:0005524">
    <property type="term" value="F:ATP binding"/>
    <property type="evidence" value="ECO:0007669"/>
    <property type="project" value="UniProtKB-UniRule"/>
</dbReference>
<dbReference type="GO" id="GO:0004810">
    <property type="term" value="F:CCA tRNA nucleotidyltransferase activity"/>
    <property type="evidence" value="ECO:0007669"/>
    <property type="project" value="InterPro"/>
</dbReference>
<dbReference type="GO" id="GO:0000049">
    <property type="term" value="F:tRNA binding"/>
    <property type="evidence" value="ECO:0007669"/>
    <property type="project" value="UniProtKB-UniRule"/>
</dbReference>
<dbReference type="GO" id="GO:0140741">
    <property type="term" value="F:tRNA-uracil-4 sulfurtransferase activity"/>
    <property type="evidence" value="ECO:0007669"/>
    <property type="project" value="UniProtKB-EC"/>
</dbReference>
<dbReference type="GO" id="GO:0009228">
    <property type="term" value="P:thiamine biosynthetic process"/>
    <property type="evidence" value="ECO:0007669"/>
    <property type="project" value="UniProtKB-KW"/>
</dbReference>
<dbReference type="GO" id="GO:0009229">
    <property type="term" value="P:thiamine diphosphate biosynthetic process"/>
    <property type="evidence" value="ECO:0007669"/>
    <property type="project" value="UniProtKB-UniRule"/>
</dbReference>
<dbReference type="GO" id="GO:0052837">
    <property type="term" value="P:thiazole biosynthetic process"/>
    <property type="evidence" value="ECO:0007669"/>
    <property type="project" value="InterPro"/>
</dbReference>
<dbReference type="GO" id="GO:0002937">
    <property type="term" value="P:tRNA 4-thiouridine biosynthesis"/>
    <property type="evidence" value="ECO:0007669"/>
    <property type="project" value="TreeGrafter"/>
</dbReference>
<dbReference type="CDD" id="cd01712">
    <property type="entry name" value="PPase_ThiI"/>
    <property type="match status" value="1"/>
</dbReference>
<dbReference type="CDD" id="cd00158">
    <property type="entry name" value="RHOD"/>
    <property type="match status" value="1"/>
</dbReference>
<dbReference type="CDD" id="cd11716">
    <property type="entry name" value="THUMP_ThiI"/>
    <property type="match status" value="1"/>
</dbReference>
<dbReference type="FunFam" id="3.30.2130.30:FF:000002">
    <property type="entry name" value="tRNA sulfurtransferase"/>
    <property type="match status" value="1"/>
</dbReference>
<dbReference type="FunFam" id="3.40.250.10:FF:000003">
    <property type="entry name" value="tRNA sulfurtransferase"/>
    <property type="match status" value="1"/>
</dbReference>
<dbReference type="FunFam" id="3.40.50.620:FF:000029">
    <property type="entry name" value="tRNA sulfurtransferase"/>
    <property type="match status" value="1"/>
</dbReference>
<dbReference type="Gene3D" id="3.30.2130.30">
    <property type="match status" value="1"/>
</dbReference>
<dbReference type="Gene3D" id="3.40.50.620">
    <property type="entry name" value="HUPs"/>
    <property type="match status" value="1"/>
</dbReference>
<dbReference type="Gene3D" id="3.40.250.10">
    <property type="entry name" value="Rhodanese-like domain"/>
    <property type="match status" value="1"/>
</dbReference>
<dbReference type="HAMAP" id="MF_00021">
    <property type="entry name" value="ThiI"/>
    <property type="match status" value="1"/>
</dbReference>
<dbReference type="InterPro" id="IPR001763">
    <property type="entry name" value="Rhodanese-like_dom"/>
</dbReference>
<dbReference type="InterPro" id="IPR036873">
    <property type="entry name" value="Rhodanese-like_dom_sf"/>
</dbReference>
<dbReference type="InterPro" id="IPR014729">
    <property type="entry name" value="Rossmann-like_a/b/a_fold"/>
</dbReference>
<dbReference type="InterPro" id="IPR020536">
    <property type="entry name" value="ThiI_AANH"/>
</dbReference>
<dbReference type="InterPro" id="IPR054173">
    <property type="entry name" value="ThiI_fer"/>
</dbReference>
<dbReference type="InterPro" id="IPR049961">
    <property type="entry name" value="ThiI_N"/>
</dbReference>
<dbReference type="InterPro" id="IPR026340">
    <property type="entry name" value="THII_Thiazole_biosynth_dom"/>
</dbReference>
<dbReference type="InterPro" id="IPR004114">
    <property type="entry name" value="THUMP_dom"/>
</dbReference>
<dbReference type="InterPro" id="IPR049962">
    <property type="entry name" value="THUMP_ThiI"/>
</dbReference>
<dbReference type="InterPro" id="IPR003720">
    <property type="entry name" value="tRNA_STrfase"/>
</dbReference>
<dbReference type="InterPro" id="IPR050102">
    <property type="entry name" value="tRNA_sulfurtransferase_ThiI"/>
</dbReference>
<dbReference type="NCBIfam" id="TIGR04271">
    <property type="entry name" value="ThiI_C_thiazole"/>
    <property type="match status" value="1"/>
</dbReference>
<dbReference type="NCBIfam" id="TIGR00342">
    <property type="entry name" value="tRNA uracil 4-sulfurtransferase ThiI"/>
    <property type="match status" value="1"/>
</dbReference>
<dbReference type="PANTHER" id="PTHR43209">
    <property type="entry name" value="TRNA SULFURTRANSFERASE"/>
    <property type="match status" value="1"/>
</dbReference>
<dbReference type="PANTHER" id="PTHR43209:SF1">
    <property type="entry name" value="TRNA SULFURTRANSFERASE"/>
    <property type="match status" value="1"/>
</dbReference>
<dbReference type="Pfam" id="PF02568">
    <property type="entry name" value="ThiI"/>
    <property type="match status" value="1"/>
</dbReference>
<dbReference type="Pfam" id="PF22025">
    <property type="entry name" value="ThiI_fer"/>
    <property type="match status" value="1"/>
</dbReference>
<dbReference type="Pfam" id="PF02926">
    <property type="entry name" value="THUMP"/>
    <property type="match status" value="1"/>
</dbReference>
<dbReference type="SMART" id="SM00981">
    <property type="entry name" value="THUMP"/>
    <property type="match status" value="1"/>
</dbReference>
<dbReference type="SUPFAM" id="SSF52402">
    <property type="entry name" value="Adenine nucleotide alpha hydrolases-like"/>
    <property type="match status" value="1"/>
</dbReference>
<dbReference type="SUPFAM" id="SSF52821">
    <property type="entry name" value="Rhodanese/Cell cycle control phosphatase"/>
    <property type="match status" value="1"/>
</dbReference>
<dbReference type="SUPFAM" id="SSF143437">
    <property type="entry name" value="THUMP domain-like"/>
    <property type="match status" value="1"/>
</dbReference>
<dbReference type="PROSITE" id="PS50206">
    <property type="entry name" value="RHODANESE_3"/>
    <property type="match status" value="1"/>
</dbReference>
<dbReference type="PROSITE" id="PS51165">
    <property type="entry name" value="THUMP"/>
    <property type="match status" value="1"/>
</dbReference>
<evidence type="ECO:0000255" key="1">
    <source>
        <dbReference type="HAMAP-Rule" id="MF_00021"/>
    </source>
</evidence>
<evidence type="ECO:0000305" key="2"/>
<reference key="1">
    <citation type="journal article" date="2002" name="Nucleic Acids Res.">
        <title>Genome sequence of Shigella flexneri 2a: insights into pathogenicity through comparison with genomes of Escherichia coli K12 and O157.</title>
        <authorList>
            <person name="Jin Q."/>
            <person name="Yuan Z."/>
            <person name="Xu J."/>
            <person name="Wang Y."/>
            <person name="Shen Y."/>
            <person name="Lu W."/>
            <person name="Wang J."/>
            <person name="Liu H."/>
            <person name="Yang J."/>
            <person name="Yang F."/>
            <person name="Zhang X."/>
            <person name="Zhang J."/>
            <person name="Yang G."/>
            <person name="Wu H."/>
            <person name="Qu D."/>
            <person name="Dong J."/>
            <person name="Sun L."/>
            <person name="Xue Y."/>
            <person name="Zhao A."/>
            <person name="Gao Y."/>
            <person name="Zhu J."/>
            <person name="Kan B."/>
            <person name="Ding K."/>
            <person name="Chen S."/>
            <person name="Cheng H."/>
            <person name="Yao Z."/>
            <person name="He B."/>
            <person name="Chen R."/>
            <person name="Ma D."/>
            <person name="Qiang B."/>
            <person name="Wen Y."/>
            <person name="Hou Y."/>
            <person name="Yu J."/>
        </authorList>
    </citation>
    <scope>NUCLEOTIDE SEQUENCE [LARGE SCALE GENOMIC DNA]</scope>
    <source>
        <strain>301 / Serotype 2a</strain>
    </source>
</reference>
<reference key="2">
    <citation type="journal article" date="2003" name="Infect. Immun.">
        <title>Complete genome sequence and comparative genomics of Shigella flexneri serotype 2a strain 2457T.</title>
        <authorList>
            <person name="Wei J."/>
            <person name="Goldberg M.B."/>
            <person name="Burland V."/>
            <person name="Venkatesan M.M."/>
            <person name="Deng W."/>
            <person name="Fournier G."/>
            <person name="Mayhew G.F."/>
            <person name="Plunkett G. III"/>
            <person name="Rose D.J."/>
            <person name="Darling A."/>
            <person name="Mau B."/>
            <person name="Perna N.T."/>
            <person name="Payne S.M."/>
            <person name="Runyen-Janecky L.J."/>
            <person name="Zhou S."/>
            <person name="Schwartz D.C."/>
            <person name="Blattner F.R."/>
        </authorList>
    </citation>
    <scope>NUCLEOTIDE SEQUENCE [LARGE SCALE GENOMIC DNA]</scope>
    <source>
        <strain>ATCC 700930 / 2457T / Serotype 2a</strain>
    </source>
</reference>
<protein>
    <recommendedName>
        <fullName evidence="1">tRNA sulfurtransferase</fullName>
        <ecNumber evidence="1">2.8.1.4</ecNumber>
    </recommendedName>
    <alternativeName>
        <fullName evidence="1">Sulfur carrier protein ThiS sulfurtransferase</fullName>
    </alternativeName>
    <alternativeName>
        <fullName evidence="1">Thiamine biosynthesis protein ThiI</fullName>
    </alternativeName>
    <alternativeName>
        <fullName evidence="1">tRNA 4-thiouridine synthase</fullName>
    </alternativeName>
</protein>
<name>THII_SHIFL</name>